<comment type="catalytic activity">
    <reaction evidence="1">
        <text>tRNA(Phe) + L-phenylalanine + ATP = L-phenylalanyl-tRNA(Phe) + AMP + diphosphate + H(+)</text>
        <dbReference type="Rhea" id="RHEA:19413"/>
        <dbReference type="Rhea" id="RHEA-COMP:9668"/>
        <dbReference type="Rhea" id="RHEA-COMP:9699"/>
        <dbReference type="ChEBI" id="CHEBI:15378"/>
        <dbReference type="ChEBI" id="CHEBI:30616"/>
        <dbReference type="ChEBI" id="CHEBI:33019"/>
        <dbReference type="ChEBI" id="CHEBI:58095"/>
        <dbReference type="ChEBI" id="CHEBI:78442"/>
        <dbReference type="ChEBI" id="CHEBI:78531"/>
        <dbReference type="ChEBI" id="CHEBI:456215"/>
        <dbReference type="EC" id="6.1.1.20"/>
    </reaction>
</comment>
<comment type="cofactor">
    <cofactor evidence="1">
        <name>Mg(2+)</name>
        <dbReference type="ChEBI" id="CHEBI:18420"/>
    </cofactor>
    <text evidence="1">Binds 2 magnesium ions per tetramer.</text>
</comment>
<comment type="subunit">
    <text evidence="1">Tetramer of two alpha and two beta subunits.</text>
</comment>
<comment type="subcellular location">
    <subcellularLocation>
        <location evidence="1">Cytoplasm</location>
    </subcellularLocation>
</comment>
<comment type="similarity">
    <text evidence="1">Belongs to the phenylalanyl-tRNA synthetase beta subunit family. Type 1 subfamily.</text>
</comment>
<organism>
    <name type="scientific">Desulfotalea psychrophila (strain LSv54 / DSM 12343)</name>
    <dbReference type="NCBI Taxonomy" id="177439"/>
    <lineage>
        <taxon>Bacteria</taxon>
        <taxon>Pseudomonadati</taxon>
        <taxon>Thermodesulfobacteriota</taxon>
        <taxon>Desulfobulbia</taxon>
        <taxon>Desulfobulbales</taxon>
        <taxon>Desulfocapsaceae</taxon>
        <taxon>Desulfotalea</taxon>
    </lineage>
</organism>
<reference key="1">
    <citation type="journal article" date="2004" name="Environ. Microbiol.">
        <title>The genome of Desulfotalea psychrophila, a sulfate-reducing bacterium from permanently cold Arctic sediments.</title>
        <authorList>
            <person name="Rabus R."/>
            <person name="Ruepp A."/>
            <person name="Frickey T."/>
            <person name="Rattei T."/>
            <person name="Fartmann B."/>
            <person name="Stark M."/>
            <person name="Bauer M."/>
            <person name="Zibat A."/>
            <person name="Lombardot T."/>
            <person name="Becker I."/>
            <person name="Amann J."/>
            <person name="Gellner K."/>
            <person name="Teeling H."/>
            <person name="Leuschner W.D."/>
            <person name="Gloeckner F.-O."/>
            <person name="Lupas A.N."/>
            <person name="Amann R."/>
            <person name="Klenk H.-P."/>
        </authorList>
    </citation>
    <scope>NUCLEOTIDE SEQUENCE [LARGE SCALE GENOMIC DNA]</scope>
    <source>
        <strain>DSM 12343 / LSv54</strain>
    </source>
</reference>
<dbReference type="EC" id="6.1.1.20" evidence="1"/>
<dbReference type="EMBL" id="CR522870">
    <property type="protein sequence ID" value="CAG36152.1"/>
    <property type="molecule type" value="Genomic_DNA"/>
</dbReference>
<dbReference type="RefSeq" id="WP_011188664.1">
    <property type="nucleotide sequence ID" value="NC_006138.1"/>
</dbReference>
<dbReference type="SMR" id="Q6ANC2"/>
<dbReference type="STRING" id="177439.DP1423"/>
<dbReference type="KEGG" id="dps:DP1423"/>
<dbReference type="eggNOG" id="COG0072">
    <property type="taxonomic scope" value="Bacteria"/>
</dbReference>
<dbReference type="eggNOG" id="COG0073">
    <property type="taxonomic scope" value="Bacteria"/>
</dbReference>
<dbReference type="HOGENOM" id="CLU_016891_0_0_7"/>
<dbReference type="OrthoDB" id="9805455at2"/>
<dbReference type="Proteomes" id="UP000000602">
    <property type="component" value="Chromosome"/>
</dbReference>
<dbReference type="GO" id="GO:0009328">
    <property type="term" value="C:phenylalanine-tRNA ligase complex"/>
    <property type="evidence" value="ECO:0007669"/>
    <property type="project" value="TreeGrafter"/>
</dbReference>
<dbReference type="GO" id="GO:0005524">
    <property type="term" value="F:ATP binding"/>
    <property type="evidence" value="ECO:0007669"/>
    <property type="project" value="UniProtKB-UniRule"/>
</dbReference>
<dbReference type="GO" id="GO:0000287">
    <property type="term" value="F:magnesium ion binding"/>
    <property type="evidence" value="ECO:0007669"/>
    <property type="project" value="UniProtKB-UniRule"/>
</dbReference>
<dbReference type="GO" id="GO:0004826">
    <property type="term" value="F:phenylalanine-tRNA ligase activity"/>
    <property type="evidence" value="ECO:0007669"/>
    <property type="project" value="UniProtKB-UniRule"/>
</dbReference>
<dbReference type="GO" id="GO:0000049">
    <property type="term" value="F:tRNA binding"/>
    <property type="evidence" value="ECO:0007669"/>
    <property type="project" value="UniProtKB-KW"/>
</dbReference>
<dbReference type="GO" id="GO:0006432">
    <property type="term" value="P:phenylalanyl-tRNA aminoacylation"/>
    <property type="evidence" value="ECO:0007669"/>
    <property type="project" value="UniProtKB-UniRule"/>
</dbReference>
<dbReference type="CDD" id="cd00769">
    <property type="entry name" value="PheRS_beta_core"/>
    <property type="match status" value="1"/>
</dbReference>
<dbReference type="CDD" id="cd02796">
    <property type="entry name" value="tRNA_bind_bactPheRS"/>
    <property type="match status" value="1"/>
</dbReference>
<dbReference type="FunFam" id="2.40.50.140:FF:000045">
    <property type="entry name" value="Phenylalanine--tRNA ligase beta subunit"/>
    <property type="match status" value="1"/>
</dbReference>
<dbReference type="FunFam" id="3.30.70.380:FF:000001">
    <property type="entry name" value="Phenylalanine--tRNA ligase beta subunit"/>
    <property type="match status" value="1"/>
</dbReference>
<dbReference type="FunFam" id="3.50.40.10:FF:000001">
    <property type="entry name" value="Phenylalanine--tRNA ligase beta subunit"/>
    <property type="match status" value="1"/>
</dbReference>
<dbReference type="Gene3D" id="3.30.56.10">
    <property type="match status" value="2"/>
</dbReference>
<dbReference type="Gene3D" id="3.30.930.10">
    <property type="entry name" value="Bira Bifunctional Protein, Domain 2"/>
    <property type="match status" value="1"/>
</dbReference>
<dbReference type="Gene3D" id="3.30.70.380">
    <property type="entry name" value="Ferrodoxin-fold anticodon-binding domain"/>
    <property type="match status" value="1"/>
</dbReference>
<dbReference type="Gene3D" id="2.40.50.140">
    <property type="entry name" value="Nucleic acid-binding proteins"/>
    <property type="match status" value="1"/>
</dbReference>
<dbReference type="Gene3D" id="3.50.40.10">
    <property type="entry name" value="Phenylalanyl-trna Synthetase, Chain B, domain 3"/>
    <property type="match status" value="1"/>
</dbReference>
<dbReference type="HAMAP" id="MF_00283">
    <property type="entry name" value="Phe_tRNA_synth_beta1"/>
    <property type="match status" value="1"/>
</dbReference>
<dbReference type="InterPro" id="IPR045864">
    <property type="entry name" value="aa-tRNA-synth_II/BPL/LPL"/>
</dbReference>
<dbReference type="InterPro" id="IPR005146">
    <property type="entry name" value="B3/B4_tRNA-bd"/>
</dbReference>
<dbReference type="InterPro" id="IPR009061">
    <property type="entry name" value="DNA-bd_dom_put_sf"/>
</dbReference>
<dbReference type="InterPro" id="IPR005121">
    <property type="entry name" value="Fdx_antiC-bd"/>
</dbReference>
<dbReference type="InterPro" id="IPR036690">
    <property type="entry name" value="Fdx_antiC-bd_sf"/>
</dbReference>
<dbReference type="InterPro" id="IPR012340">
    <property type="entry name" value="NA-bd_OB-fold"/>
</dbReference>
<dbReference type="InterPro" id="IPR045060">
    <property type="entry name" value="Phe-tRNA-ligase_IIc_bsu"/>
</dbReference>
<dbReference type="InterPro" id="IPR004532">
    <property type="entry name" value="Phe-tRNA-ligase_IIc_bsu_bact"/>
</dbReference>
<dbReference type="InterPro" id="IPR020825">
    <property type="entry name" value="Phe-tRNA_synthase-like_B3/B4"/>
</dbReference>
<dbReference type="InterPro" id="IPR041616">
    <property type="entry name" value="PheRS_beta_core"/>
</dbReference>
<dbReference type="InterPro" id="IPR002547">
    <property type="entry name" value="tRNA-bd_dom"/>
</dbReference>
<dbReference type="InterPro" id="IPR033714">
    <property type="entry name" value="tRNA_bind_bactPheRS"/>
</dbReference>
<dbReference type="InterPro" id="IPR005147">
    <property type="entry name" value="tRNA_synthase_B5-dom"/>
</dbReference>
<dbReference type="NCBIfam" id="TIGR00472">
    <property type="entry name" value="pheT_bact"/>
    <property type="match status" value="1"/>
</dbReference>
<dbReference type="NCBIfam" id="NF045760">
    <property type="entry name" value="YtpR"/>
    <property type="match status" value="1"/>
</dbReference>
<dbReference type="PANTHER" id="PTHR10947:SF0">
    <property type="entry name" value="PHENYLALANINE--TRNA LIGASE BETA SUBUNIT"/>
    <property type="match status" value="1"/>
</dbReference>
<dbReference type="PANTHER" id="PTHR10947">
    <property type="entry name" value="PHENYLALANYL-TRNA SYNTHETASE BETA CHAIN AND LEUCINE-RICH REPEAT-CONTAINING PROTEIN 47"/>
    <property type="match status" value="1"/>
</dbReference>
<dbReference type="Pfam" id="PF03483">
    <property type="entry name" value="B3_4"/>
    <property type="match status" value="1"/>
</dbReference>
<dbReference type="Pfam" id="PF03484">
    <property type="entry name" value="B5"/>
    <property type="match status" value="1"/>
</dbReference>
<dbReference type="Pfam" id="PF03147">
    <property type="entry name" value="FDX-ACB"/>
    <property type="match status" value="1"/>
</dbReference>
<dbReference type="Pfam" id="PF01588">
    <property type="entry name" value="tRNA_bind"/>
    <property type="match status" value="1"/>
</dbReference>
<dbReference type="Pfam" id="PF17759">
    <property type="entry name" value="tRNA_synthFbeta"/>
    <property type="match status" value="1"/>
</dbReference>
<dbReference type="SMART" id="SM00873">
    <property type="entry name" value="B3_4"/>
    <property type="match status" value="1"/>
</dbReference>
<dbReference type="SMART" id="SM00874">
    <property type="entry name" value="B5"/>
    <property type="match status" value="1"/>
</dbReference>
<dbReference type="SMART" id="SM00896">
    <property type="entry name" value="FDX-ACB"/>
    <property type="match status" value="1"/>
</dbReference>
<dbReference type="SUPFAM" id="SSF54991">
    <property type="entry name" value="Anticodon-binding domain of PheRS"/>
    <property type="match status" value="1"/>
</dbReference>
<dbReference type="SUPFAM" id="SSF55681">
    <property type="entry name" value="Class II aaRS and biotin synthetases"/>
    <property type="match status" value="1"/>
</dbReference>
<dbReference type="SUPFAM" id="SSF50249">
    <property type="entry name" value="Nucleic acid-binding proteins"/>
    <property type="match status" value="1"/>
</dbReference>
<dbReference type="SUPFAM" id="SSF56037">
    <property type="entry name" value="PheT/TilS domain"/>
    <property type="match status" value="1"/>
</dbReference>
<dbReference type="SUPFAM" id="SSF46955">
    <property type="entry name" value="Putative DNA-binding domain"/>
    <property type="match status" value="1"/>
</dbReference>
<dbReference type="PROSITE" id="PS51483">
    <property type="entry name" value="B5"/>
    <property type="match status" value="1"/>
</dbReference>
<dbReference type="PROSITE" id="PS51447">
    <property type="entry name" value="FDX_ACB"/>
    <property type="match status" value="1"/>
</dbReference>
<dbReference type="PROSITE" id="PS50886">
    <property type="entry name" value="TRBD"/>
    <property type="match status" value="1"/>
</dbReference>
<feature type="chain" id="PRO_0000126878" description="Phenylalanine--tRNA ligase beta subunit">
    <location>
        <begin position="1"/>
        <end position="816"/>
    </location>
</feature>
<feature type="domain" description="tRNA-binding" evidence="1">
    <location>
        <begin position="40"/>
        <end position="148"/>
    </location>
</feature>
<feature type="domain" description="B5" evidence="1">
    <location>
        <begin position="401"/>
        <end position="479"/>
    </location>
</feature>
<feature type="domain" description="FDX-ACB" evidence="1">
    <location>
        <begin position="721"/>
        <end position="814"/>
    </location>
</feature>
<feature type="binding site" evidence="1">
    <location>
        <position position="457"/>
    </location>
    <ligand>
        <name>Mg(2+)</name>
        <dbReference type="ChEBI" id="CHEBI:18420"/>
        <note>shared with alpha subunit</note>
    </ligand>
</feature>
<feature type="binding site" evidence="1">
    <location>
        <position position="463"/>
    </location>
    <ligand>
        <name>Mg(2+)</name>
        <dbReference type="ChEBI" id="CHEBI:18420"/>
        <note>shared with alpha subunit</note>
    </ligand>
</feature>
<feature type="binding site" evidence="1">
    <location>
        <position position="466"/>
    </location>
    <ligand>
        <name>Mg(2+)</name>
        <dbReference type="ChEBI" id="CHEBI:18420"/>
        <note>shared with alpha subunit</note>
    </ligand>
</feature>
<feature type="binding site" evidence="1">
    <location>
        <position position="467"/>
    </location>
    <ligand>
        <name>Mg(2+)</name>
        <dbReference type="ChEBI" id="CHEBI:18420"/>
        <note>shared with alpha subunit</note>
    </ligand>
</feature>
<proteinExistence type="inferred from homology"/>
<gene>
    <name evidence="1" type="primary">pheT</name>
    <name type="ordered locus">DP1423</name>
</gene>
<name>SYFB_DESPS</name>
<keyword id="KW-0030">Aminoacyl-tRNA synthetase</keyword>
<keyword id="KW-0067">ATP-binding</keyword>
<keyword id="KW-0963">Cytoplasm</keyword>
<keyword id="KW-0436">Ligase</keyword>
<keyword id="KW-0460">Magnesium</keyword>
<keyword id="KW-0479">Metal-binding</keyword>
<keyword id="KW-0547">Nucleotide-binding</keyword>
<keyword id="KW-0648">Protein biosynthesis</keyword>
<keyword id="KW-1185">Reference proteome</keyword>
<keyword id="KW-0694">RNA-binding</keyword>
<keyword id="KW-0820">tRNA-binding</keyword>
<protein>
    <recommendedName>
        <fullName evidence="1">Phenylalanine--tRNA ligase beta subunit</fullName>
        <ecNumber evidence="1">6.1.1.20</ecNumber>
    </recommendedName>
    <alternativeName>
        <fullName evidence="1">Phenylalanyl-tRNA synthetase beta subunit</fullName>
        <shortName evidence="1">PheRS</shortName>
    </alternativeName>
</protein>
<accession>Q6ANC2</accession>
<sequence length="816" mass="89675">MKFTLNWLQKYVDTTGLTPTEIADKLTMLGLEVDSVAPIFEELAALKTGLVISCEKHPDADKLSLCQVQVGDDTHQIVCGAPNVREGLAVTVALPGAVLPGNFKIKKSKVRGIASAGMLCSERELGIGEDHDGIMELPEGMAHGQRFIDAMELSDTFIEVDLTPNRPDCASVIGTAREIAGKIGRPLQIPVKDRQIEAESRDFSVEVESSELCPRYTAKLIKNVTVGKSPWWLRKLLVSVGMRPINNIVDITNFVMLEYGQPLHAFDFKKVAGNKIVVRLPRENETEITTLDGTKREISAEMLLICDADKPIAVAGVMGGANSEIDAESTDILLESACFNPVSVRKTARNLKLPSEASYRFERGVDPGGVVNALDRAAELIAEIAGGALCSEGIDNYDGKKAVEVQRFSISRTSSLIGVEFSGEELTAMLTSIEMVVEKDPENEDILLVTAPTFRIDIEREADLVEEIARIYGYDNVPTATPLVALSYPEQDDDRLKRYPLALKLTRIGFNEAINYSFVTAQHADMLQLSEQDYRRKVVTLLNPLSEEQAVMRACLLPSLLENVKRNISFQKTAVKLFEIGKIFLAQGEDVQPIERQCITGVLSGNKFGESSSLYFKSANVDIFDAKGTVEFILSEMGLTDLANNEKIEFTVPPEGAREPFSTQDYALTIHLGPNVLGTIGKVEEEVLKSFGIKHEVYYFDLNFDALCALSPQTKAFSSLPVYPAVKRDIALVVPASISAGELLATVRSSRDKLMEYAEIFDVFEGGKIQKGYKSVAVSITYRSQTKTLTEKNVEKSHSKIVSLLTDRFGGSFRDA</sequence>
<evidence type="ECO:0000255" key="1">
    <source>
        <dbReference type="HAMAP-Rule" id="MF_00283"/>
    </source>
</evidence>